<protein>
    <recommendedName>
        <fullName evidence="1">UPF0229 protein YeaH</fullName>
    </recommendedName>
</protein>
<evidence type="ECO:0000255" key="1">
    <source>
        <dbReference type="HAMAP-Rule" id="MF_01232"/>
    </source>
</evidence>
<evidence type="ECO:0000256" key="2">
    <source>
        <dbReference type="SAM" id="MobiDB-lite"/>
    </source>
</evidence>
<comment type="similarity">
    <text evidence="1">Belongs to the UPF0229 family.</text>
</comment>
<accession>B1IPE7</accession>
<feature type="chain" id="PRO_1000085718" description="UPF0229 protein YeaH">
    <location>
        <begin position="1"/>
        <end position="427"/>
    </location>
</feature>
<feature type="region of interest" description="Disordered" evidence="2">
    <location>
        <begin position="79"/>
        <end position="110"/>
    </location>
</feature>
<feature type="compositionally biased region" description="Basic and acidic residues" evidence="2">
    <location>
        <begin position="79"/>
        <end position="90"/>
    </location>
</feature>
<feature type="compositionally biased region" description="Gly residues" evidence="2">
    <location>
        <begin position="92"/>
        <end position="102"/>
    </location>
</feature>
<reference key="1">
    <citation type="submission" date="2008-02" db="EMBL/GenBank/DDBJ databases">
        <title>Complete sequence of Escherichia coli C str. ATCC 8739.</title>
        <authorList>
            <person name="Copeland A."/>
            <person name="Lucas S."/>
            <person name="Lapidus A."/>
            <person name="Glavina del Rio T."/>
            <person name="Dalin E."/>
            <person name="Tice H."/>
            <person name="Bruce D."/>
            <person name="Goodwin L."/>
            <person name="Pitluck S."/>
            <person name="Kiss H."/>
            <person name="Brettin T."/>
            <person name="Detter J.C."/>
            <person name="Han C."/>
            <person name="Kuske C.R."/>
            <person name="Schmutz J."/>
            <person name="Larimer F."/>
            <person name="Land M."/>
            <person name="Hauser L."/>
            <person name="Kyrpides N."/>
            <person name="Mikhailova N."/>
            <person name="Ingram L."/>
            <person name="Richardson P."/>
        </authorList>
    </citation>
    <scope>NUCLEOTIDE SEQUENCE [LARGE SCALE GENOMIC DNA]</scope>
    <source>
        <strain>ATCC 8739 / DSM 1576 / NBRC 3972 / NCIMB 8545 / WDCM 00012 / Crooks</strain>
    </source>
</reference>
<dbReference type="EMBL" id="CP000946">
    <property type="protein sequence ID" value="ACA77497.1"/>
    <property type="molecule type" value="Genomic_DNA"/>
</dbReference>
<dbReference type="RefSeq" id="WP_000219686.1">
    <property type="nucleotide sequence ID" value="NZ_MTFT01000006.1"/>
</dbReference>
<dbReference type="SMR" id="B1IPE7"/>
<dbReference type="KEGG" id="ecl:EcolC_1848"/>
<dbReference type="HOGENOM" id="CLU_049702_0_0_6"/>
<dbReference type="HAMAP" id="MF_01232">
    <property type="entry name" value="UPF0229"/>
    <property type="match status" value="1"/>
</dbReference>
<dbReference type="InterPro" id="IPR006698">
    <property type="entry name" value="UPF0229"/>
</dbReference>
<dbReference type="NCBIfam" id="NF003707">
    <property type="entry name" value="PRK05325.1-2"/>
    <property type="match status" value="1"/>
</dbReference>
<dbReference type="NCBIfam" id="NF003708">
    <property type="entry name" value="PRK05325.1-3"/>
    <property type="match status" value="1"/>
</dbReference>
<dbReference type="PANTHER" id="PTHR30510">
    <property type="entry name" value="UPF0229 PROTEIN YEAH"/>
    <property type="match status" value="1"/>
</dbReference>
<dbReference type="PANTHER" id="PTHR30510:SF2">
    <property type="entry name" value="UPF0229 PROTEIN YEAH"/>
    <property type="match status" value="1"/>
</dbReference>
<dbReference type="Pfam" id="PF04285">
    <property type="entry name" value="DUF444"/>
    <property type="match status" value="1"/>
</dbReference>
<gene>
    <name evidence="1" type="primary">yeaH</name>
    <name type="ordered locus">EcolC_1848</name>
</gene>
<organism>
    <name type="scientific">Escherichia coli (strain ATCC 8739 / DSM 1576 / NBRC 3972 / NCIMB 8545 / WDCM 00012 / Crooks)</name>
    <dbReference type="NCBI Taxonomy" id="481805"/>
    <lineage>
        <taxon>Bacteria</taxon>
        <taxon>Pseudomonadati</taxon>
        <taxon>Pseudomonadota</taxon>
        <taxon>Gammaproteobacteria</taxon>
        <taxon>Enterobacterales</taxon>
        <taxon>Enterobacteriaceae</taxon>
        <taxon>Escherichia</taxon>
    </lineage>
</organism>
<sequence length="427" mass="49450">MTWFIDRRLNGKNKSMVNRQRFLRRYKAQIKQSISEAINKRSVTDVDSGESVSIPTEDISEPMFHQGRGGLRHRVHPGNDHFVQNDRIERPQGGGGGSGSGQGQASQDGEGQDEFVFQISKDEYLDLLFEDLALPNLKQNQQRQLTEYKTHRAGYTANGVPANISVVRSLQNSLARRTAMTAGKRRELHALEENLAIISNSEPAQLLEEERLRKEIAELRAKIERVPFIDTFDLRYKNYEKRPDPSSQAVMFCLMDVSGSMDQSTKDMAKRFYILLYLFLSRTYKNVEVVYIRHHTQAKEVDEHEFFYSQETGGTIVSSALKLMDEVVKERYNPAQWNIYAAQASDGDNWADDSPLCHEILAKKLLPVVRYYSYIEITRRAHQTLWREYEHLQSTFDNFAMQHIRDQDDIYPVFRELFHKQNATAKD</sequence>
<name>YEAH_ECOLC</name>
<proteinExistence type="inferred from homology"/>